<sequence length="348" mass="36752">MKIIGIESSCDETGVAVYDTALSGSAALRAHSVYSQVALHAEYGGVVPELASRDHVRKLLPLLRQTLAEAKLSVEELDGVAYTAGPGLVGALLVGAGVARALAWALEVPAIGVHHMEGHLLSPLLEDDPPEVPFVALLVSGGHTQLVAVDAIGDYRLLGETLDDAAGEAFDKVAKLMGLPYPGGPQLAALAERGIPGRFCFTRPMVDRPGLDFSFSGLKTQVLLAWRNSDQSDAIRVDVARGFEDAVVDTLAIKCERALDTVACQTLVVAGGVGANKCLRARLQAMCRQRGGRACFPRPALCTDNGAMIAFAGALRLQAGQQSDVAVRVTPRWDMAALPPLVSRSCRR</sequence>
<feature type="chain" id="PRO_0000303622" description="tRNA N6-adenosine threonylcarbamoyltransferase">
    <location>
        <begin position="1"/>
        <end position="348"/>
    </location>
</feature>
<feature type="binding site" evidence="1">
    <location>
        <position position="115"/>
    </location>
    <ligand>
        <name>Fe cation</name>
        <dbReference type="ChEBI" id="CHEBI:24875"/>
    </ligand>
</feature>
<feature type="binding site" evidence="1">
    <location>
        <position position="119"/>
    </location>
    <ligand>
        <name>Fe cation</name>
        <dbReference type="ChEBI" id="CHEBI:24875"/>
    </ligand>
</feature>
<feature type="binding site" evidence="1">
    <location>
        <begin position="138"/>
        <end position="142"/>
    </location>
    <ligand>
        <name>substrate</name>
    </ligand>
</feature>
<feature type="binding site" evidence="1">
    <location>
        <position position="171"/>
    </location>
    <ligand>
        <name>substrate</name>
    </ligand>
</feature>
<feature type="binding site" evidence="1">
    <location>
        <position position="184"/>
    </location>
    <ligand>
        <name>substrate</name>
    </ligand>
</feature>
<feature type="binding site" evidence="1">
    <location>
        <position position="276"/>
    </location>
    <ligand>
        <name>substrate</name>
    </ligand>
</feature>
<feature type="binding site" evidence="1">
    <location>
        <position position="304"/>
    </location>
    <ligand>
        <name>Fe cation</name>
        <dbReference type="ChEBI" id="CHEBI:24875"/>
    </ligand>
</feature>
<gene>
    <name evidence="1" type="primary">tsaD</name>
    <name type="synonym">gcp</name>
    <name type="ordered locus">PD_1643</name>
</gene>
<accession>Q87B17</accession>
<comment type="function">
    <text evidence="1">Required for the formation of a threonylcarbamoyl group on adenosine at position 37 (t(6)A37) in tRNAs that read codons beginning with adenine. Is involved in the transfer of the threonylcarbamoyl moiety of threonylcarbamoyl-AMP (TC-AMP) to the N6 group of A37, together with TsaE and TsaB. TsaD likely plays a direct catalytic role in this reaction.</text>
</comment>
<comment type="catalytic activity">
    <reaction evidence="1">
        <text>L-threonylcarbamoyladenylate + adenosine(37) in tRNA = N(6)-L-threonylcarbamoyladenosine(37) in tRNA + AMP + H(+)</text>
        <dbReference type="Rhea" id="RHEA:37059"/>
        <dbReference type="Rhea" id="RHEA-COMP:10162"/>
        <dbReference type="Rhea" id="RHEA-COMP:10163"/>
        <dbReference type="ChEBI" id="CHEBI:15378"/>
        <dbReference type="ChEBI" id="CHEBI:73682"/>
        <dbReference type="ChEBI" id="CHEBI:74411"/>
        <dbReference type="ChEBI" id="CHEBI:74418"/>
        <dbReference type="ChEBI" id="CHEBI:456215"/>
        <dbReference type="EC" id="2.3.1.234"/>
    </reaction>
</comment>
<comment type="cofactor">
    <cofactor evidence="1">
        <name>Fe(2+)</name>
        <dbReference type="ChEBI" id="CHEBI:29033"/>
    </cofactor>
    <text evidence="1">Binds 1 Fe(2+) ion per subunit.</text>
</comment>
<comment type="subcellular location">
    <subcellularLocation>
        <location evidence="1">Cytoplasm</location>
    </subcellularLocation>
</comment>
<comment type="similarity">
    <text evidence="1">Belongs to the KAE1 / TsaD family.</text>
</comment>
<evidence type="ECO:0000255" key="1">
    <source>
        <dbReference type="HAMAP-Rule" id="MF_01445"/>
    </source>
</evidence>
<proteinExistence type="inferred from homology"/>
<name>TSAD_XYLFT</name>
<reference key="1">
    <citation type="journal article" date="2003" name="J. Bacteriol.">
        <title>Comparative analyses of the complete genome sequences of Pierce's disease and citrus variegated chlorosis strains of Xylella fastidiosa.</title>
        <authorList>
            <person name="Van Sluys M.A."/>
            <person name="de Oliveira M.C."/>
            <person name="Monteiro-Vitorello C.B."/>
            <person name="Miyaki C.Y."/>
            <person name="Furlan L.R."/>
            <person name="Camargo L.E.A."/>
            <person name="da Silva A.C.R."/>
            <person name="Moon D.H."/>
            <person name="Takita M.A."/>
            <person name="Lemos E.G.M."/>
            <person name="Machado M.A."/>
            <person name="Ferro M.I.T."/>
            <person name="da Silva F.R."/>
            <person name="Goldman M.H.S."/>
            <person name="Goldman G.H."/>
            <person name="Lemos M.V.F."/>
            <person name="El-Dorry H."/>
            <person name="Tsai S.M."/>
            <person name="Carrer H."/>
            <person name="Carraro D.M."/>
            <person name="de Oliveira R.C."/>
            <person name="Nunes L.R."/>
            <person name="Siqueira W.J."/>
            <person name="Coutinho L.L."/>
            <person name="Kimura E.T."/>
            <person name="Ferro E.S."/>
            <person name="Harakava R."/>
            <person name="Kuramae E.E."/>
            <person name="Marino C.L."/>
            <person name="Giglioti E."/>
            <person name="Abreu I.L."/>
            <person name="Alves L.M.C."/>
            <person name="do Amaral A.M."/>
            <person name="Baia G.S."/>
            <person name="Blanco S.R."/>
            <person name="Brito M.S."/>
            <person name="Cannavan F.S."/>
            <person name="Celestino A.V."/>
            <person name="da Cunha A.F."/>
            <person name="Fenille R.C."/>
            <person name="Ferro J.A."/>
            <person name="Formighieri E.F."/>
            <person name="Kishi L.T."/>
            <person name="Leoni S.G."/>
            <person name="Oliveira A.R."/>
            <person name="Rosa V.E. Jr."/>
            <person name="Sassaki F.T."/>
            <person name="Sena J.A.D."/>
            <person name="de Souza A.A."/>
            <person name="Truffi D."/>
            <person name="Tsukumo F."/>
            <person name="Yanai G.M."/>
            <person name="Zaros L.G."/>
            <person name="Civerolo E.L."/>
            <person name="Simpson A.J.G."/>
            <person name="Almeida N.F. Jr."/>
            <person name="Setubal J.C."/>
            <person name="Kitajima J.P."/>
        </authorList>
    </citation>
    <scope>NUCLEOTIDE SEQUENCE [LARGE SCALE GENOMIC DNA]</scope>
    <source>
        <strain>Temecula1 / ATCC 700964</strain>
    </source>
</reference>
<keyword id="KW-0012">Acyltransferase</keyword>
<keyword id="KW-0963">Cytoplasm</keyword>
<keyword id="KW-0408">Iron</keyword>
<keyword id="KW-0479">Metal-binding</keyword>
<keyword id="KW-1185">Reference proteome</keyword>
<keyword id="KW-0808">Transferase</keyword>
<keyword id="KW-0819">tRNA processing</keyword>
<dbReference type="EC" id="2.3.1.234" evidence="1"/>
<dbReference type="EMBL" id="AE009442">
    <property type="protein sequence ID" value="AAO29483.1"/>
    <property type="molecule type" value="Genomic_DNA"/>
</dbReference>
<dbReference type="RefSeq" id="WP_004083595.1">
    <property type="nucleotide sequence ID" value="NC_004556.1"/>
</dbReference>
<dbReference type="SMR" id="Q87B17"/>
<dbReference type="GeneID" id="93905477"/>
<dbReference type="KEGG" id="xft:PD_1643"/>
<dbReference type="HOGENOM" id="CLU_023208_0_0_6"/>
<dbReference type="Proteomes" id="UP000002516">
    <property type="component" value="Chromosome"/>
</dbReference>
<dbReference type="GO" id="GO:0005737">
    <property type="term" value="C:cytoplasm"/>
    <property type="evidence" value="ECO:0007669"/>
    <property type="project" value="UniProtKB-SubCell"/>
</dbReference>
<dbReference type="GO" id="GO:0005506">
    <property type="term" value="F:iron ion binding"/>
    <property type="evidence" value="ECO:0007669"/>
    <property type="project" value="UniProtKB-UniRule"/>
</dbReference>
<dbReference type="GO" id="GO:0061711">
    <property type="term" value="F:N(6)-L-threonylcarbamoyladenine synthase activity"/>
    <property type="evidence" value="ECO:0007669"/>
    <property type="project" value="UniProtKB-EC"/>
</dbReference>
<dbReference type="GO" id="GO:0002949">
    <property type="term" value="P:tRNA threonylcarbamoyladenosine modification"/>
    <property type="evidence" value="ECO:0007669"/>
    <property type="project" value="UniProtKB-UniRule"/>
</dbReference>
<dbReference type="CDD" id="cd24133">
    <property type="entry name" value="ASKHA_NBD_TsaD_bac"/>
    <property type="match status" value="1"/>
</dbReference>
<dbReference type="FunFam" id="3.30.420.40:FF:000040">
    <property type="entry name" value="tRNA N6-adenosine threonylcarbamoyltransferase"/>
    <property type="match status" value="1"/>
</dbReference>
<dbReference type="Gene3D" id="3.30.420.40">
    <property type="match status" value="2"/>
</dbReference>
<dbReference type="HAMAP" id="MF_01445">
    <property type="entry name" value="TsaD"/>
    <property type="match status" value="1"/>
</dbReference>
<dbReference type="InterPro" id="IPR043129">
    <property type="entry name" value="ATPase_NBD"/>
</dbReference>
<dbReference type="InterPro" id="IPR000905">
    <property type="entry name" value="Gcp-like_dom"/>
</dbReference>
<dbReference type="InterPro" id="IPR017861">
    <property type="entry name" value="KAE1/TsaD"/>
</dbReference>
<dbReference type="InterPro" id="IPR022450">
    <property type="entry name" value="TsaD"/>
</dbReference>
<dbReference type="NCBIfam" id="TIGR00329">
    <property type="entry name" value="gcp_kae1"/>
    <property type="match status" value="1"/>
</dbReference>
<dbReference type="NCBIfam" id="TIGR03723">
    <property type="entry name" value="T6A_TsaD_YgjD"/>
    <property type="match status" value="1"/>
</dbReference>
<dbReference type="PANTHER" id="PTHR11735">
    <property type="entry name" value="TRNA N6-ADENOSINE THREONYLCARBAMOYLTRANSFERASE"/>
    <property type="match status" value="1"/>
</dbReference>
<dbReference type="PANTHER" id="PTHR11735:SF6">
    <property type="entry name" value="TRNA N6-ADENOSINE THREONYLCARBAMOYLTRANSFERASE, MITOCHONDRIAL"/>
    <property type="match status" value="1"/>
</dbReference>
<dbReference type="Pfam" id="PF00814">
    <property type="entry name" value="TsaD"/>
    <property type="match status" value="1"/>
</dbReference>
<dbReference type="PRINTS" id="PR00789">
    <property type="entry name" value="OSIALOPTASE"/>
</dbReference>
<dbReference type="SUPFAM" id="SSF53067">
    <property type="entry name" value="Actin-like ATPase domain"/>
    <property type="match status" value="2"/>
</dbReference>
<organism>
    <name type="scientific">Xylella fastidiosa (strain Temecula1 / ATCC 700964)</name>
    <dbReference type="NCBI Taxonomy" id="183190"/>
    <lineage>
        <taxon>Bacteria</taxon>
        <taxon>Pseudomonadati</taxon>
        <taxon>Pseudomonadota</taxon>
        <taxon>Gammaproteobacteria</taxon>
        <taxon>Lysobacterales</taxon>
        <taxon>Lysobacteraceae</taxon>
        <taxon>Xylella</taxon>
    </lineage>
</organism>
<protein>
    <recommendedName>
        <fullName evidence="1">tRNA N6-adenosine threonylcarbamoyltransferase</fullName>
        <ecNumber evidence="1">2.3.1.234</ecNumber>
    </recommendedName>
    <alternativeName>
        <fullName evidence="1">N6-L-threonylcarbamoyladenine synthase</fullName>
        <shortName evidence="1">t(6)A synthase</shortName>
    </alternativeName>
    <alternativeName>
        <fullName evidence="1">t(6)A37 threonylcarbamoyladenosine biosynthesis protein TsaD</fullName>
    </alternativeName>
    <alternativeName>
        <fullName evidence="1">tRNA threonylcarbamoyladenosine biosynthesis protein TsaD</fullName>
    </alternativeName>
</protein>